<keyword id="KW-0687">Ribonucleoprotein</keyword>
<keyword id="KW-0689">Ribosomal protein</keyword>
<feature type="chain" id="PRO_0000347171" description="Large ribosomal subunit protein uL30">
    <location>
        <begin position="1"/>
        <end position="176"/>
    </location>
</feature>
<organism>
    <name type="scientific">Pyrobaculum arsenaticum (strain DSM 13514 / JCM 11321 / PZ6)</name>
    <dbReference type="NCBI Taxonomy" id="340102"/>
    <lineage>
        <taxon>Archaea</taxon>
        <taxon>Thermoproteota</taxon>
        <taxon>Thermoprotei</taxon>
        <taxon>Thermoproteales</taxon>
        <taxon>Thermoproteaceae</taxon>
        <taxon>Pyrobaculum</taxon>
    </lineage>
</organism>
<gene>
    <name evidence="1" type="primary">rpl30</name>
    <name type="ordered locus">Pars_0314</name>
</gene>
<protein>
    <recommendedName>
        <fullName evidence="1">Large ribosomal subunit protein uL30</fullName>
    </recommendedName>
    <alternativeName>
        <fullName evidence="2">50S ribosomal protein L30</fullName>
    </alternativeName>
</protein>
<name>RL30_PYRAR</name>
<comment type="subunit">
    <text evidence="1">Part of the 50S ribosomal subunit.</text>
</comment>
<comment type="similarity">
    <text evidence="1">Belongs to the universal ribosomal protein uL30 family.</text>
</comment>
<evidence type="ECO:0000255" key="1">
    <source>
        <dbReference type="HAMAP-Rule" id="MF_01371"/>
    </source>
</evidence>
<evidence type="ECO:0000305" key="2"/>
<dbReference type="EMBL" id="CP000660">
    <property type="protein sequence ID" value="ABP49926.1"/>
    <property type="molecule type" value="Genomic_DNA"/>
</dbReference>
<dbReference type="SMR" id="A4WHQ9"/>
<dbReference type="STRING" id="340102.Pars_0314"/>
<dbReference type="KEGG" id="pas:Pars_0314"/>
<dbReference type="HOGENOM" id="CLU_055156_6_0_2"/>
<dbReference type="OrthoDB" id="6379at2157"/>
<dbReference type="PhylomeDB" id="A4WHQ9"/>
<dbReference type="Proteomes" id="UP000001567">
    <property type="component" value="Chromosome"/>
</dbReference>
<dbReference type="GO" id="GO:0022625">
    <property type="term" value="C:cytosolic large ribosomal subunit"/>
    <property type="evidence" value="ECO:0007669"/>
    <property type="project" value="TreeGrafter"/>
</dbReference>
<dbReference type="GO" id="GO:0003723">
    <property type="term" value="F:RNA binding"/>
    <property type="evidence" value="ECO:0007669"/>
    <property type="project" value="TreeGrafter"/>
</dbReference>
<dbReference type="GO" id="GO:0003735">
    <property type="term" value="F:structural constituent of ribosome"/>
    <property type="evidence" value="ECO:0007669"/>
    <property type="project" value="InterPro"/>
</dbReference>
<dbReference type="GO" id="GO:0000463">
    <property type="term" value="P:maturation of LSU-rRNA from tricistronic rRNA transcript (SSU-rRNA, 5.8S rRNA, LSU-rRNA)"/>
    <property type="evidence" value="ECO:0007669"/>
    <property type="project" value="TreeGrafter"/>
</dbReference>
<dbReference type="GO" id="GO:0006412">
    <property type="term" value="P:translation"/>
    <property type="evidence" value="ECO:0007669"/>
    <property type="project" value="UniProtKB-UniRule"/>
</dbReference>
<dbReference type="CDD" id="cd01657">
    <property type="entry name" value="Ribosomal_L7_archeal_euk"/>
    <property type="match status" value="1"/>
</dbReference>
<dbReference type="FunFam" id="1.10.15.30:FF:000002">
    <property type="entry name" value="50S ribosomal protein L30"/>
    <property type="match status" value="1"/>
</dbReference>
<dbReference type="Gene3D" id="1.10.15.30">
    <property type="match status" value="1"/>
</dbReference>
<dbReference type="Gene3D" id="3.30.1390.20">
    <property type="entry name" value="Ribosomal protein L30, ferredoxin-like fold domain"/>
    <property type="match status" value="1"/>
</dbReference>
<dbReference type="HAMAP" id="MF_01371_A">
    <property type="entry name" value="Ribosomal_uL30_A"/>
    <property type="match status" value="1"/>
</dbReference>
<dbReference type="InterPro" id="IPR036919">
    <property type="entry name" value="Ribo_uL30_ferredoxin-like_sf"/>
</dbReference>
<dbReference type="InterPro" id="IPR039699">
    <property type="entry name" value="Ribosomal_uL30"/>
</dbReference>
<dbReference type="InterPro" id="IPR005997">
    <property type="entry name" value="Ribosomal_uL30_arc"/>
</dbReference>
<dbReference type="InterPro" id="IPR035808">
    <property type="entry name" value="Ribosomal_uL30_euk_arc"/>
</dbReference>
<dbReference type="InterPro" id="IPR016082">
    <property type="entry name" value="Ribosomal_uL30_ferredoxin-like"/>
</dbReference>
<dbReference type="NCBIfam" id="NF004711">
    <property type="entry name" value="PRK06049.1"/>
    <property type="match status" value="1"/>
</dbReference>
<dbReference type="NCBIfam" id="TIGR01309">
    <property type="entry name" value="uL30_arch"/>
    <property type="match status" value="1"/>
</dbReference>
<dbReference type="PANTHER" id="PTHR11524">
    <property type="entry name" value="60S RIBOSOMAL PROTEIN L7"/>
    <property type="match status" value="1"/>
</dbReference>
<dbReference type="PANTHER" id="PTHR11524:SF16">
    <property type="entry name" value="LARGE RIBOSOMAL SUBUNIT PROTEIN UL30"/>
    <property type="match status" value="1"/>
</dbReference>
<dbReference type="Pfam" id="PF00327">
    <property type="entry name" value="Ribosomal_L30"/>
    <property type="match status" value="1"/>
</dbReference>
<dbReference type="SUPFAM" id="SSF55129">
    <property type="entry name" value="Ribosomal protein L30p/L7e"/>
    <property type="match status" value="1"/>
</dbReference>
<sequence>MMAEAKLIYPRYAVVRLRGIPTTPRDIARTLDLLRLRRKFTMVVVPGSPSIMGMIQEVNDWVTWGEIEADTLAEVLKKRGRIVGDKPLTLEYLKKWGWQSFEEVALAYVAGEIERLSCGRYYAREGQRPPCIPYLKPFFRLHPPRGGLNSVKLHFAAGGDLGYRGPLINDLIRRML</sequence>
<accession>A4WHQ9</accession>
<reference key="1">
    <citation type="submission" date="2007-04" db="EMBL/GenBank/DDBJ databases">
        <title>Complete sequence of Pyrobaculum arsenaticum DSM 13514.</title>
        <authorList>
            <consortium name="US DOE Joint Genome Institute"/>
            <person name="Copeland A."/>
            <person name="Lucas S."/>
            <person name="Lapidus A."/>
            <person name="Barry K."/>
            <person name="Glavina del Rio T."/>
            <person name="Dalin E."/>
            <person name="Tice H."/>
            <person name="Pitluck S."/>
            <person name="Chain P."/>
            <person name="Malfatti S."/>
            <person name="Shin M."/>
            <person name="Vergez L."/>
            <person name="Schmutz J."/>
            <person name="Larimer F."/>
            <person name="Land M."/>
            <person name="Hauser L."/>
            <person name="Kyrpides N."/>
            <person name="Mikhailova N."/>
            <person name="Cozen A.E."/>
            <person name="Fitz-Gibbon S.T."/>
            <person name="House C.H."/>
            <person name="Saltikov C."/>
            <person name="Lowe T.M."/>
            <person name="Richardson P."/>
        </authorList>
    </citation>
    <scope>NUCLEOTIDE SEQUENCE [LARGE SCALE GENOMIC DNA]</scope>
    <source>
        <strain>ATCC 700994 / DSM 13514 / JCM 11321 / PZ6</strain>
    </source>
</reference>
<proteinExistence type="inferred from homology"/>